<name>DEF_BARHE</name>
<protein>
    <recommendedName>
        <fullName evidence="1">Peptide deformylase</fullName>
        <shortName evidence="1">PDF</shortName>
        <ecNumber evidence="1">3.5.1.88</ecNumber>
    </recommendedName>
    <alternativeName>
        <fullName evidence="1">Polypeptide deformylase</fullName>
    </alternativeName>
</protein>
<keyword id="KW-0378">Hydrolase</keyword>
<keyword id="KW-0408">Iron</keyword>
<keyword id="KW-0479">Metal-binding</keyword>
<keyword id="KW-0648">Protein biosynthesis</keyword>
<gene>
    <name evidence="1" type="primary">def</name>
    <name type="ordered locus">BH00760</name>
</gene>
<accession>Q6G5F0</accession>
<feature type="chain" id="PRO_0000301007" description="Peptide deformylase">
    <location>
        <begin position="1"/>
        <end position="176"/>
    </location>
</feature>
<feature type="active site" evidence="1">
    <location>
        <position position="137"/>
    </location>
</feature>
<feature type="binding site" evidence="1">
    <location>
        <position position="94"/>
    </location>
    <ligand>
        <name>Fe cation</name>
        <dbReference type="ChEBI" id="CHEBI:24875"/>
    </ligand>
</feature>
<feature type="binding site" evidence="1">
    <location>
        <position position="136"/>
    </location>
    <ligand>
        <name>Fe cation</name>
        <dbReference type="ChEBI" id="CHEBI:24875"/>
    </ligand>
</feature>
<feature type="binding site" evidence="1">
    <location>
        <position position="140"/>
    </location>
    <ligand>
        <name>Fe cation</name>
        <dbReference type="ChEBI" id="CHEBI:24875"/>
    </ligand>
</feature>
<proteinExistence type="inferred from homology"/>
<sequence length="176" mass="20414">MPMRPLVIVPDPILREISKPVEYIDSAVQKLADDMLETMYHAQGVGLAAIQIGIPLRMLVLDVSRNDEQKNPLVIINPEVLWLSDERNIYKEGCLSIPEYFAEVERPKRLCVRYQNREGKQTEIEADDLLATCLQHEIDHLNGRLFIDYLSKIKRDMVIRKFKKRAKEKNTQEAVL</sequence>
<dbReference type="EC" id="3.5.1.88" evidence="1"/>
<dbReference type="EMBL" id="BX897699">
    <property type="protein sequence ID" value="CAF26892.1"/>
    <property type="molecule type" value="Genomic_DNA"/>
</dbReference>
<dbReference type="RefSeq" id="WP_011180037.1">
    <property type="nucleotide sequence ID" value="NZ_LRIJ02000001.1"/>
</dbReference>
<dbReference type="SMR" id="Q6G5F0"/>
<dbReference type="PaxDb" id="283166-BH00760"/>
<dbReference type="EnsemblBacteria" id="CAF26892">
    <property type="protein sequence ID" value="CAF26892"/>
    <property type="gene ID" value="BH00760"/>
</dbReference>
<dbReference type="GeneID" id="92986362"/>
<dbReference type="KEGG" id="bhe:BH00760"/>
<dbReference type="eggNOG" id="COG0242">
    <property type="taxonomic scope" value="Bacteria"/>
</dbReference>
<dbReference type="OrthoDB" id="9804313at2"/>
<dbReference type="Proteomes" id="UP000000421">
    <property type="component" value="Chromosome"/>
</dbReference>
<dbReference type="GO" id="GO:0046872">
    <property type="term" value="F:metal ion binding"/>
    <property type="evidence" value="ECO:0007669"/>
    <property type="project" value="UniProtKB-KW"/>
</dbReference>
<dbReference type="GO" id="GO:0042586">
    <property type="term" value="F:peptide deformylase activity"/>
    <property type="evidence" value="ECO:0007669"/>
    <property type="project" value="UniProtKB-UniRule"/>
</dbReference>
<dbReference type="GO" id="GO:0043686">
    <property type="term" value="P:co-translational protein modification"/>
    <property type="evidence" value="ECO:0007669"/>
    <property type="project" value="TreeGrafter"/>
</dbReference>
<dbReference type="GO" id="GO:0006412">
    <property type="term" value="P:translation"/>
    <property type="evidence" value="ECO:0007669"/>
    <property type="project" value="UniProtKB-UniRule"/>
</dbReference>
<dbReference type="CDD" id="cd00487">
    <property type="entry name" value="Pep_deformylase"/>
    <property type="match status" value="1"/>
</dbReference>
<dbReference type="FunFam" id="3.90.45.10:FF:000005">
    <property type="entry name" value="Peptide deformylase"/>
    <property type="match status" value="1"/>
</dbReference>
<dbReference type="Gene3D" id="3.90.45.10">
    <property type="entry name" value="Peptide deformylase"/>
    <property type="match status" value="1"/>
</dbReference>
<dbReference type="HAMAP" id="MF_00163">
    <property type="entry name" value="Pep_deformylase"/>
    <property type="match status" value="1"/>
</dbReference>
<dbReference type="InterPro" id="IPR023635">
    <property type="entry name" value="Peptide_deformylase"/>
</dbReference>
<dbReference type="InterPro" id="IPR036821">
    <property type="entry name" value="Peptide_deformylase_sf"/>
</dbReference>
<dbReference type="NCBIfam" id="TIGR00079">
    <property type="entry name" value="pept_deformyl"/>
    <property type="match status" value="1"/>
</dbReference>
<dbReference type="NCBIfam" id="NF001159">
    <property type="entry name" value="PRK00150.1-3"/>
    <property type="match status" value="1"/>
</dbReference>
<dbReference type="PANTHER" id="PTHR10458">
    <property type="entry name" value="PEPTIDE DEFORMYLASE"/>
    <property type="match status" value="1"/>
</dbReference>
<dbReference type="PANTHER" id="PTHR10458:SF22">
    <property type="entry name" value="PEPTIDE DEFORMYLASE"/>
    <property type="match status" value="1"/>
</dbReference>
<dbReference type="Pfam" id="PF01327">
    <property type="entry name" value="Pep_deformylase"/>
    <property type="match status" value="1"/>
</dbReference>
<dbReference type="PIRSF" id="PIRSF004749">
    <property type="entry name" value="Pep_def"/>
    <property type="match status" value="1"/>
</dbReference>
<dbReference type="PRINTS" id="PR01576">
    <property type="entry name" value="PDEFORMYLASE"/>
</dbReference>
<dbReference type="SUPFAM" id="SSF56420">
    <property type="entry name" value="Peptide deformylase"/>
    <property type="match status" value="1"/>
</dbReference>
<evidence type="ECO:0000255" key="1">
    <source>
        <dbReference type="HAMAP-Rule" id="MF_00163"/>
    </source>
</evidence>
<organism>
    <name type="scientific">Bartonella henselae (strain ATCC 49882 / DSM 28221 / CCUG 30454 / Houston 1)</name>
    <name type="common">Rochalimaea henselae</name>
    <dbReference type="NCBI Taxonomy" id="283166"/>
    <lineage>
        <taxon>Bacteria</taxon>
        <taxon>Pseudomonadati</taxon>
        <taxon>Pseudomonadota</taxon>
        <taxon>Alphaproteobacteria</taxon>
        <taxon>Hyphomicrobiales</taxon>
        <taxon>Bartonellaceae</taxon>
        <taxon>Bartonella</taxon>
    </lineage>
</organism>
<comment type="function">
    <text evidence="1">Removes the formyl group from the N-terminal Met of newly synthesized proteins. Requires at least a dipeptide for an efficient rate of reaction. N-terminal L-methionine is a prerequisite for activity but the enzyme has broad specificity at other positions.</text>
</comment>
<comment type="catalytic activity">
    <reaction evidence="1">
        <text>N-terminal N-formyl-L-methionyl-[peptide] + H2O = N-terminal L-methionyl-[peptide] + formate</text>
        <dbReference type="Rhea" id="RHEA:24420"/>
        <dbReference type="Rhea" id="RHEA-COMP:10639"/>
        <dbReference type="Rhea" id="RHEA-COMP:10640"/>
        <dbReference type="ChEBI" id="CHEBI:15377"/>
        <dbReference type="ChEBI" id="CHEBI:15740"/>
        <dbReference type="ChEBI" id="CHEBI:49298"/>
        <dbReference type="ChEBI" id="CHEBI:64731"/>
        <dbReference type="EC" id="3.5.1.88"/>
    </reaction>
</comment>
<comment type="cofactor">
    <cofactor evidence="1">
        <name>Fe(2+)</name>
        <dbReference type="ChEBI" id="CHEBI:29033"/>
    </cofactor>
    <text evidence="1">Binds 1 Fe(2+) ion.</text>
</comment>
<comment type="similarity">
    <text evidence="1">Belongs to the polypeptide deformylase family.</text>
</comment>
<reference key="1">
    <citation type="journal article" date="2004" name="Proc. Natl. Acad. Sci. U.S.A.">
        <title>The louse-borne human pathogen Bartonella quintana is a genomic derivative of the zoonotic agent Bartonella henselae.</title>
        <authorList>
            <person name="Alsmark U.C.M."/>
            <person name="Frank A.C."/>
            <person name="Karlberg E.O."/>
            <person name="Legault B.-A."/>
            <person name="Ardell D.H."/>
            <person name="Canbaeck B."/>
            <person name="Eriksson A.-S."/>
            <person name="Naeslund A.K."/>
            <person name="Handley S.A."/>
            <person name="Huvet M."/>
            <person name="La Scola B."/>
            <person name="Holmberg M."/>
            <person name="Andersson S.G.E."/>
        </authorList>
    </citation>
    <scope>NUCLEOTIDE SEQUENCE [LARGE SCALE GENOMIC DNA]</scope>
    <source>
        <strain>ATCC 49882 / DSM 28221 / CCUG 30454 / Houston 1</strain>
    </source>
</reference>